<dbReference type="EC" id="6.3.4.19" evidence="1"/>
<dbReference type="EMBL" id="AP006715">
    <property type="protein sequence ID" value="BAE92507.1"/>
    <property type="molecule type" value="Genomic_DNA"/>
</dbReference>
<dbReference type="RefSeq" id="YP_537064.1">
    <property type="nucleotide sequence ID" value="NC_007932.1"/>
</dbReference>
<dbReference type="SMR" id="Q1XDA4"/>
<dbReference type="GO" id="GO:0009507">
    <property type="term" value="C:chloroplast"/>
    <property type="evidence" value="ECO:0007669"/>
    <property type="project" value="UniProtKB-SubCell"/>
</dbReference>
<dbReference type="GO" id="GO:0005524">
    <property type="term" value="F:ATP binding"/>
    <property type="evidence" value="ECO:0007669"/>
    <property type="project" value="UniProtKB-UniRule"/>
</dbReference>
<dbReference type="GO" id="GO:0032267">
    <property type="term" value="F:tRNA(Ile)-lysidine synthase activity"/>
    <property type="evidence" value="ECO:0007669"/>
    <property type="project" value="UniProtKB-EC"/>
</dbReference>
<dbReference type="GO" id="GO:0006400">
    <property type="term" value="P:tRNA modification"/>
    <property type="evidence" value="ECO:0007669"/>
    <property type="project" value="UniProtKB-UniRule"/>
</dbReference>
<dbReference type="CDD" id="cd01992">
    <property type="entry name" value="TilS_N"/>
    <property type="match status" value="1"/>
</dbReference>
<dbReference type="Gene3D" id="1.20.59.20">
    <property type="match status" value="1"/>
</dbReference>
<dbReference type="Gene3D" id="3.40.50.620">
    <property type="entry name" value="HUPs"/>
    <property type="match status" value="1"/>
</dbReference>
<dbReference type="HAMAP" id="MF_01161">
    <property type="entry name" value="tRNA_Ile_lys_synt"/>
    <property type="match status" value="1"/>
</dbReference>
<dbReference type="InterPro" id="IPR014729">
    <property type="entry name" value="Rossmann-like_a/b/a_fold"/>
</dbReference>
<dbReference type="InterPro" id="IPR011063">
    <property type="entry name" value="TilS/TtcA_N"/>
</dbReference>
<dbReference type="InterPro" id="IPR012094">
    <property type="entry name" value="tRNA_Ile_lys_synt"/>
</dbReference>
<dbReference type="InterPro" id="IPR012795">
    <property type="entry name" value="tRNA_Ile_lys_synt_N"/>
</dbReference>
<dbReference type="NCBIfam" id="TIGR02432">
    <property type="entry name" value="lysidine_TilS_N"/>
    <property type="match status" value="1"/>
</dbReference>
<dbReference type="PANTHER" id="PTHR43033">
    <property type="entry name" value="TRNA(ILE)-LYSIDINE SYNTHASE-RELATED"/>
    <property type="match status" value="1"/>
</dbReference>
<dbReference type="PANTHER" id="PTHR43033:SF1">
    <property type="entry name" value="TRNA(ILE)-LYSIDINE SYNTHASE-RELATED"/>
    <property type="match status" value="1"/>
</dbReference>
<dbReference type="Pfam" id="PF01171">
    <property type="entry name" value="ATP_bind_3"/>
    <property type="match status" value="1"/>
</dbReference>
<dbReference type="SUPFAM" id="SSF52402">
    <property type="entry name" value="Adenine nucleotide alpha hydrolases-like"/>
    <property type="match status" value="1"/>
</dbReference>
<dbReference type="SUPFAM" id="SSF82829">
    <property type="entry name" value="MesJ substrate recognition domain-like"/>
    <property type="match status" value="1"/>
</dbReference>
<name>TILS_PYRYE</name>
<organism>
    <name type="scientific">Pyropia yezoensis</name>
    <name type="common">Susabi-nori</name>
    <name type="synonym">Porphyra yezoensis</name>
    <dbReference type="NCBI Taxonomy" id="2788"/>
    <lineage>
        <taxon>Eukaryota</taxon>
        <taxon>Rhodophyta</taxon>
        <taxon>Bangiophyceae</taxon>
        <taxon>Bangiales</taxon>
        <taxon>Bangiaceae</taxon>
        <taxon>Pyropia</taxon>
    </lineage>
</organism>
<keyword id="KW-0067">ATP-binding</keyword>
<keyword id="KW-0150">Chloroplast</keyword>
<keyword id="KW-0436">Ligase</keyword>
<keyword id="KW-0547">Nucleotide-binding</keyword>
<keyword id="KW-0934">Plastid</keyword>
<keyword id="KW-0819">tRNA processing</keyword>
<gene>
    <name evidence="1" type="primary">tilS</name>
</gene>
<feature type="chain" id="PRO_0000277073" description="tRNA(Ile)-lysidine synthase, chloroplastic">
    <location>
        <begin position="1"/>
        <end position="329"/>
    </location>
</feature>
<feature type="binding site" evidence="1">
    <location>
        <begin position="32"/>
        <end position="37"/>
    </location>
    <ligand>
        <name>ATP</name>
        <dbReference type="ChEBI" id="CHEBI:30616"/>
    </ligand>
</feature>
<geneLocation type="chloroplast"/>
<accession>Q1XDA4</accession>
<sequence>MFQNSFLHKKFISTIEKNNLLPYNSSLLVSFSGGQDSLALVKILYDFKNIYNWKISLIHFDHRWRSDSMLVSKQVIKYAKMCNLSVYYFECPKYLNTEETSRKWRYLTLINTAYVNNFNTIVLAHTATDKAETMLSNLFRGTSLDGLSSIHWSSQLSNAVHLVRPLLNCYRSETSWFCRKYFLPVWIDQSNYNNSLSRNRLRQELIPYIKSYFQPQIEQKCYLLSSLISLDVDFLEQEALRIYSLIQHEELLAMNYLVIKLLHPSLQSRILKIFFISNLDLNLNSIQISDIILLINQSISTNINISNYILGTDGTWLYVGAKTKCIKSN</sequence>
<protein>
    <recommendedName>
        <fullName evidence="1">tRNA(Ile)-lysidine synthase, chloroplastic</fullName>
        <ecNumber evidence="1">6.3.4.19</ecNumber>
    </recommendedName>
    <alternativeName>
        <fullName evidence="1">tRNA(Ile)-2-lysyl-cytidine synthase</fullName>
    </alternativeName>
    <alternativeName>
        <fullName evidence="1">tRNA(Ile)-lysidine synthetase</fullName>
    </alternativeName>
</protein>
<reference key="1">
    <citation type="submission" date="2003-11" db="EMBL/GenBank/DDBJ databases">
        <title>Whole genome sequence of Porphyra yezoensis chloroplast.</title>
        <authorList>
            <person name="Kunimoto M."/>
            <person name="Morishima K."/>
            <person name="Yoshikawa M."/>
            <person name="Fukuda S."/>
            <person name="Kobayashi T."/>
            <person name="Kobayashi M."/>
            <person name="Okazaki T."/>
            <person name="Ohara I."/>
            <person name="Nakayama I."/>
        </authorList>
    </citation>
    <scope>NUCLEOTIDE SEQUENCE [LARGE SCALE GENOMIC DNA]</scope>
    <source>
        <strain>U-51</strain>
    </source>
</reference>
<proteinExistence type="inferred from homology"/>
<comment type="function">
    <text evidence="1">Ligates lysine onto the cytidine present at position 34 of the AUA codon-specific tRNA(Ile) that contains the anticodon CAU, in an ATP-dependent manner. Cytidine is converted to lysidine, thus changing the amino acid specificity of the tRNA from methionine to isoleucine.</text>
</comment>
<comment type="catalytic activity">
    <reaction evidence="1">
        <text>cytidine(34) in tRNA(Ile2) + L-lysine + ATP = lysidine(34) in tRNA(Ile2) + AMP + diphosphate + H(+)</text>
        <dbReference type="Rhea" id="RHEA:43744"/>
        <dbReference type="Rhea" id="RHEA-COMP:10625"/>
        <dbReference type="Rhea" id="RHEA-COMP:10670"/>
        <dbReference type="ChEBI" id="CHEBI:15378"/>
        <dbReference type="ChEBI" id="CHEBI:30616"/>
        <dbReference type="ChEBI" id="CHEBI:32551"/>
        <dbReference type="ChEBI" id="CHEBI:33019"/>
        <dbReference type="ChEBI" id="CHEBI:82748"/>
        <dbReference type="ChEBI" id="CHEBI:83665"/>
        <dbReference type="ChEBI" id="CHEBI:456215"/>
        <dbReference type="EC" id="6.3.4.19"/>
    </reaction>
</comment>
<comment type="subcellular location">
    <subcellularLocation>
        <location>Plastid</location>
        <location>Chloroplast</location>
    </subcellularLocation>
</comment>
<comment type="domain">
    <text>The N-terminal region contains the highly conserved SGGXDS motif, predicted to be a P-loop motif involved in ATP binding.</text>
</comment>
<comment type="similarity">
    <text evidence="1">Belongs to the tRNA(Ile)-lysidine synthase family.</text>
</comment>
<evidence type="ECO:0000255" key="1">
    <source>
        <dbReference type="HAMAP-Rule" id="MF_01161"/>
    </source>
</evidence>